<accession>Q5V2X5</accession>
<reference key="1">
    <citation type="journal article" date="2004" name="Genome Res.">
        <title>Genome sequence of Haloarcula marismortui: a halophilic archaeon from the Dead Sea.</title>
        <authorList>
            <person name="Baliga N.S."/>
            <person name="Bonneau R."/>
            <person name="Facciotti M.T."/>
            <person name="Pan M."/>
            <person name="Glusman G."/>
            <person name="Deutsch E.W."/>
            <person name="Shannon P."/>
            <person name="Chiu Y."/>
            <person name="Weng R.S."/>
            <person name="Gan R.R."/>
            <person name="Hung P."/>
            <person name="Date S.V."/>
            <person name="Marcotte E."/>
            <person name="Hood L."/>
            <person name="Ng W.V."/>
        </authorList>
    </citation>
    <scope>NUCLEOTIDE SEQUENCE [LARGE SCALE GENOMIC DNA]</scope>
    <source>
        <strain>ATCC 43049 / DSM 3752 / JCM 8966 / VKM B-1809</strain>
    </source>
</reference>
<feature type="chain" id="PRO_0000140037" description="Ribonuclease P protein component 3">
    <location>
        <begin position="1"/>
        <end position="235"/>
    </location>
</feature>
<keyword id="KW-0963">Cytoplasm</keyword>
<keyword id="KW-0255">Endonuclease</keyword>
<keyword id="KW-0378">Hydrolase</keyword>
<keyword id="KW-0540">Nuclease</keyword>
<keyword id="KW-1185">Reference proteome</keyword>
<keyword id="KW-0819">tRNA processing</keyword>
<protein>
    <recommendedName>
        <fullName evidence="1">Ribonuclease P protein component 3</fullName>
        <shortName evidence="1">RNase P component 3</shortName>
        <ecNumber evidence="1">3.1.26.5</ecNumber>
    </recommendedName>
    <alternativeName>
        <fullName evidence="1">Rpp30</fullName>
    </alternativeName>
</protein>
<sequence>MYEAVYAHPDGDSTVARHALTAADSEYDGIVVRNHGDEQADYDADAISDAYGVDVAAGIEVRADDPSRASGFVGNYRSDRTVVVVHGGDRRINRFAVEQPTVDVLAHPMRDDGDFNHVLANAAADNGVRVEFDFGPVLRASGGSRVRAIKELRKLRELVENAGAPFVVSASPSTHLQIRAPRDIIAVGETIGFDADTVREGLTEWGQIVERNRERQSGAVIEPGVRLEDDADDAE</sequence>
<gene>
    <name evidence="1" type="primary">rnp3</name>
    <name type="ordered locus">rrnAC1177</name>
</gene>
<dbReference type="EC" id="3.1.26.5" evidence="1"/>
<dbReference type="EMBL" id="AY596297">
    <property type="protein sequence ID" value="AAV46127.1"/>
    <property type="molecule type" value="Genomic_DNA"/>
</dbReference>
<dbReference type="RefSeq" id="WP_011223482.1">
    <property type="nucleotide sequence ID" value="NC_006396.1"/>
</dbReference>
<dbReference type="SMR" id="Q5V2X5"/>
<dbReference type="STRING" id="272569.rrnAC1177"/>
<dbReference type="PaxDb" id="272569-rrnAC1177"/>
<dbReference type="EnsemblBacteria" id="AAV46127">
    <property type="protein sequence ID" value="AAV46127"/>
    <property type="gene ID" value="rrnAC1177"/>
</dbReference>
<dbReference type="GeneID" id="40152172"/>
<dbReference type="KEGG" id="hma:rrnAC1177"/>
<dbReference type="PATRIC" id="fig|272569.17.peg.1893"/>
<dbReference type="eggNOG" id="arCOG00307">
    <property type="taxonomic scope" value="Archaea"/>
</dbReference>
<dbReference type="HOGENOM" id="CLU_074509_1_0_2"/>
<dbReference type="Proteomes" id="UP000001169">
    <property type="component" value="Chromosome I"/>
</dbReference>
<dbReference type="GO" id="GO:0005737">
    <property type="term" value="C:cytoplasm"/>
    <property type="evidence" value="ECO:0007669"/>
    <property type="project" value="UniProtKB-SubCell"/>
</dbReference>
<dbReference type="GO" id="GO:0030677">
    <property type="term" value="C:ribonuclease P complex"/>
    <property type="evidence" value="ECO:0007669"/>
    <property type="project" value="UniProtKB-UniRule"/>
</dbReference>
<dbReference type="GO" id="GO:0004526">
    <property type="term" value="F:ribonuclease P activity"/>
    <property type="evidence" value="ECO:0007669"/>
    <property type="project" value="UniProtKB-UniRule"/>
</dbReference>
<dbReference type="GO" id="GO:0001682">
    <property type="term" value="P:tRNA 5'-leader removal"/>
    <property type="evidence" value="ECO:0007669"/>
    <property type="project" value="UniProtKB-UniRule"/>
</dbReference>
<dbReference type="Gene3D" id="3.20.20.140">
    <property type="entry name" value="Metal-dependent hydrolases"/>
    <property type="match status" value="1"/>
</dbReference>
<dbReference type="HAMAP" id="MF_00756">
    <property type="entry name" value="RNase_P_3"/>
    <property type="match status" value="1"/>
</dbReference>
<dbReference type="InterPro" id="IPR016195">
    <property type="entry name" value="Pol/histidinol_Pase-like"/>
</dbReference>
<dbReference type="InterPro" id="IPR023539">
    <property type="entry name" value="RNase_P_comp-3_arc"/>
</dbReference>
<dbReference type="InterPro" id="IPR002738">
    <property type="entry name" value="RNase_P_p30"/>
</dbReference>
<dbReference type="Pfam" id="PF01876">
    <property type="entry name" value="RNase_P_p30"/>
    <property type="match status" value="1"/>
</dbReference>
<dbReference type="SUPFAM" id="SSF89550">
    <property type="entry name" value="PHP domain-like"/>
    <property type="match status" value="1"/>
</dbReference>
<proteinExistence type="inferred from homology"/>
<evidence type="ECO:0000255" key="1">
    <source>
        <dbReference type="HAMAP-Rule" id="MF_00756"/>
    </source>
</evidence>
<organism>
    <name type="scientific">Haloarcula marismortui (strain ATCC 43049 / DSM 3752 / JCM 8966 / VKM B-1809)</name>
    <name type="common">Halobacterium marismortui</name>
    <dbReference type="NCBI Taxonomy" id="272569"/>
    <lineage>
        <taxon>Archaea</taxon>
        <taxon>Methanobacteriati</taxon>
        <taxon>Methanobacteriota</taxon>
        <taxon>Stenosarchaea group</taxon>
        <taxon>Halobacteria</taxon>
        <taxon>Halobacteriales</taxon>
        <taxon>Haloarculaceae</taxon>
        <taxon>Haloarcula</taxon>
    </lineage>
</organism>
<comment type="function">
    <text evidence="1">Part of ribonuclease P, a protein complex that generates mature tRNA molecules by cleaving their 5'-ends.</text>
</comment>
<comment type="catalytic activity">
    <reaction evidence="1">
        <text>Endonucleolytic cleavage of RNA, removing 5'-extranucleotides from tRNA precursor.</text>
        <dbReference type="EC" id="3.1.26.5"/>
    </reaction>
</comment>
<comment type="subunit">
    <text evidence="1">Consists of a catalytic RNA component and at least 4-5 protein subunits.</text>
</comment>
<comment type="subcellular location">
    <subcellularLocation>
        <location evidence="1">Cytoplasm</location>
    </subcellularLocation>
</comment>
<comment type="similarity">
    <text evidence="1">Belongs to the eukaryotic/archaeal RNase P protein component 3 family.</text>
</comment>
<name>RNP3_HALMA</name>